<sequence>MAEITSAKAMARTVRVSPRKSRLVLDNIRGKSVADAIAILTFTPNKAAEIILKVLNSAVANAENNFGLDKANLVVSEAFANEGPTMKRFRPRAKGSASPINKRTAHITVAVAEK</sequence>
<comment type="function">
    <text evidence="1">This protein binds specifically to 23S rRNA; its binding is stimulated by other ribosomal proteins, e.g. L4, L17, and L20. It is important during the early stages of 50S assembly. It makes multiple contacts with different domains of the 23S rRNA in the assembled 50S subunit and ribosome (By similarity).</text>
</comment>
<comment type="function">
    <text evidence="1">The globular domain of the protein is located near the polypeptide exit tunnel on the outside of the subunit, while an extended beta-hairpin is found that lines the wall of the exit tunnel in the center of the 70S ribosome.</text>
</comment>
<comment type="subunit">
    <text evidence="1">Part of the 50S ribosomal subunit.</text>
</comment>
<comment type="similarity">
    <text evidence="1">Belongs to the universal ribosomal protein uL22 family.</text>
</comment>
<accession>P61183</accession>
<accession>Q9WVU5</accession>
<feature type="chain" id="PRO_0000125237" description="Large ribosomal subunit protein uL22">
    <location>
        <begin position="1"/>
        <end position="114"/>
    </location>
</feature>
<name>RL22_STRR6</name>
<protein>
    <recommendedName>
        <fullName evidence="1">Large ribosomal subunit protein uL22</fullName>
    </recommendedName>
    <alternativeName>
        <fullName evidence="2">50S ribosomal protein L22</fullName>
    </alternativeName>
</protein>
<evidence type="ECO:0000255" key="1">
    <source>
        <dbReference type="HAMAP-Rule" id="MF_01331"/>
    </source>
</evidence>
<evidence type="ECO:0000305" key="2"/>
<keyword id="KW-1185">Reference proteome</keyword>
<keyword id="KW-0687">Ribonucleoprotein</keyword>
<keyword id="KW-0689">Ribosomal protein</keyword>
<keyword id="KW-0694">RNA-binding</keyword>
<keyword id="KW-0699">rRNA-binding</keyword>
<reference key="1">
    <citation type="journal article" date="2000" name="Antimicrob. Agents Chemother.">
        <title>Mutations in ribosomal protein L16 conferring reduced susceptibility to evernimicin (SCH27899): implications for mechanism of action.</title>
        <authorList>
            <person name="Adrian P.V."/>
            <person name="Zhao W."/>
            <person name="Black T.A."/>
            <person name="Shaw K.J."/>
            <person name="Hare R.S."/>
            <person name="Klugman K.P."/>
        </authorList>
    </citation>
    <scope>NUCLEOTIDE SEQUENCE [GENOMIC DNA]</scope>
</reference>
<reference key="2">
    <citation type="journal article" date="2001" name="J. Bacteriol.">
        <title>Genome of the bacterium Streptococcus pneumoniae strain R6.</title>
        <authorList>
            <person name="Hoskins J."/>
            <person name="Alborn W.E. Jr."/>
            <person name="Arnold J."/>
            <person name="Blaszczak L.C."/>
            <person name="Burgett S."/>
            <person name="DeHoff B.S."/>
            <person name="Estrem S.T."/>
            <person name="Fritz L."/>
            <person name="Fu D.-J."/>
            <person name="Fuller W."/>
            <person name="Geringer C."/>
            <person name="Gilmour R."/>
            <person name="Glass J.S."/>
            <person name="Khoja H."/>
            <person name="Kraft A.R."/>
            <person name="Lagace R.E."/>
            <person name="LeBlanc D.J."/>
            <person name="Lee L.N."/>
            <person name="Lefkowitz E.J."/>
            <person name="Lu J."/>
            <person name="Matsushima P."/>
            <person name="McAhren S.M."/>
            <person name="McHenney M."/>
            <person name="McLeaster K."/>
            <person name="Mundy C.W."/>
            <person name="Nicas T.I."/>
            <person name="Norris F.H."/>
            <person name="O'Gara M."/>
            <person name="Peery R.B."/>
            <person name="Robertson G.T."/>
            <person name="Rockey P."/>
            <person name="Sun P.-M."/>
            <person name="Winkler M.E."/>
            <person name="Yang Y."/>
            <person name="Young-Bellido M."/>
            <person name="Zhao G."/>
            <person name="Zook C.A."/>
            <person name="Baltz R.H."/>
            <person name="Jaskunas S.R."/>
            <person name="Rosteck P.R. Jr."/>
            <person name="Skatrud P.L."/>
            <person name="Glass J.I."/>
        </authorList>
    </citation>
    <scope>NUCLEOTIDE SEQUENCE [LARGE SCALE GENOMIC DNA]</scope>
    <source>
        <strain>ATCC BAA-255 / R6</strain>
    </source>
</reference>
<gene>
    <name evidence="1" type="primary">rplV</name>
    <name type="ordered locus">spr0194</name>
</gene>
<organism>
    <name type="scientific">Streptococcus pneumoniae (strain ATCC BAA-255 / R6)</name>
    <dbReference type="NCBI Taxonomy" id="171101"/>
    <lineage>
        <taxon>Bacteria</taxon>
        <taxon>Bacillati</taxon>
        <taxon>Bacillota</taxon>
        <taxon>Bacilli</taxon>
        <taxon>Lactobacillales</taxon>
        <taxon>Streptococcaceae</taxon>
        <taxon>Streptococcus</taxon>
    </lineage>
</organism>
<dbReference type="EMBL" id="AF126059">
    <property type="protein sequence ID" value="AAD33261.1"/>
    <property type="molecule type" value="Genomic_DNA"/>
</dbReference>
<dbReference type="EMBL" id="AE007317">
    <property type="protein sequence ID" value="AAK98998.1"/>
    <property type="molecule type" value="Genomic_DNA"/>
</dbReference>
<dbReference type="PIR" id="B97896">
    <property type="entry name" value="B97896"/>
</dbReference>
<dbReference type="RefSeq" id="NP_357788.1">
    <property type="nucleotide sequence ID" value="NC_003098.1"/>
</dbReference>
<dbReference type="RefSeq" id="WP_000818137.1">
    <property type="nucleotide sequence ID" value="NC_003098.1"/>
</dbReference>
<dbReference type="SMR" id="P61183"/>
<dbReference type="STRING" id="171101.spr0194"/>
<dbReference type="GeneID" id="93738962"/>
<dbReference type="KEGG" id="spr:spr0194"/>
<dbReference type="PATRIC" id="fig|171101.6.peg.225"/>
<dbReference type="eggNOG" id="COG0091">
    <property type="taxonomic scope" value="Bacteria"/>
</dbReference>
<dbReference type="HOGENOM" id="CLU_083987_3_3_9"/>
<dbReference type="PRO" id="PR:P61183"/>
<dbReference type="Proteomes" id="UP000000586">
    <property type="component" value="Chromosome"/>
</dbReference>
<dbReference type="GO" id="GO:0022625">
    <property type="term" value="C:cytosolic large ribosomal subunit"/>
    <property type="evidence" value="ECO:0000318"/>
    <property type="project" value="GO_Central"/>
</dbReference>
<dbReference type="GO" id="GO:0019843">
    <property type="term" value="F:rRNA binding"/>
    <property type="evidence" value="ECO:0007669"/>
    <property type="project" value="UniProtKB-UniRule"/>
</dbReference>
<dbReference type="GO" id="GO:0003735">
    <property type="term" value="F:structural constituent of ribosome"/>
    <property type="evidence" value="ECO:0000318"/>
    <property type="project" value="GO_Central"/>
</dbReference>
<dbReference type="GO" id="GO:0006412">
    <property type="term" value="P:translation"/>
    <property type="evidence" value="ECO:0000318"/>
    <property type="project" value="GO_Central"/>
</dbReference>
<dbReference type="CDD" id="cd00336">
    <property type="entry name" value="Ribosomal_L22"/>
    <property type="match status" value="1"/>
</dbReference>
<dbReference type="FunFam" id="3.90.470.10:FF:000001">
    <property type="entry name" value="50S ribosomal protein L22"/>
    <property type="match status" value="1"/>
</dbReference>
<dbReference type="Gene3D" id="3.90.470.10">
    <property type="entry name" value="Ribosomal protein L22/L17"/>
    <property type="match status" value="1"/>
</dbReference>
<dbReference type="HAMAP" id="MF_01331_B">
    <property type="entry name" value="Ribosomal_uL22_B"/>
    <property type="match status" value="1"/>
</dbReference>
<dbReference type="InterPro" id="IPR001063">
    <property type="entry name" value="Ribosomal_uL22"/>
</dbReference>
<dbReference type="InterPro" id="IPR005727">
    <property type="entry name" value="Ribosomal_uL22_bac/chlpt-type"/>
</dbReference>
<dbReference type="InterPro" id="IPR047867">
    <property type="entry name" value="Ribosomal_uL22_bac/org-type"/>
</dbReference>
<dbReference type="InterPro" id="IPR018260">
    <property type="entry name" value="Ribosomal_uL22_CS"/>
</dbReference>
<dbReference type="InterPro" id="IPR036394">
    <property type="entry name" value="Ribosomal_uL22_sf"/>
</dbReference>
<dbReference type="NCBIfam" id="TIGR01044">
    <property type="entry name" value="rplV_bact"/>
    <property type="match status" value="1"/>
</dbReference>
<dbReference type="PANTHER" id="PTHR13501">
    <property type="entry name" value="CHLOROPLAST 50S RIBOSOMAL PROTEIN L22-RELATED"/>
    <property type="match status" value="1"/>
</dbReference>
<dbReference type="PANTHER" id="PTHR13501:SF8">
    <property type="entry name" value="LARGE RIBOSOMAL SUBUNIT PROTEIN UL22M"/>
    <property type="match status" value="1"/>
</dbReference>
<dbReference type="Pfam" id="PF00237">
    <property type="entry name" value="Ribosomal_L22"/>
    <property type="match status" value="1"/>
</dbReference>
<dbReference type="SUPFAM" id="SSF54843">
    <property type="entry name" value="Ribosomal protein L22"/>
    <property type="match status" value="1"/>
</dbReference>
<dbReference type="PROSITE" id="PS00464">
    <property type="entry name" value="RIBOSOMAL_L22"/>
    <property type="match status" value="1"/>
</dbReference>
<proteinExistence type="inferred from homology"/>